<reference key="1">
    <citation type="journal article" date="2008" name="J. Bacteriol.">
        <title>The pangenome structure of Escherichia coli: comparative genomic analysis of E. coli commensal and pathogenic isolates.</title>
        <authorList>
            <person name="Rasko D.A."/>
            <person name="Rosovitz M.J."/>
            <person name="Myers G.S.A."/>
            <person name="Mongodin E.F."/>
            <person name="Fricke W.F."/>
            <person name="Gajer P."/>
            <person name="Crabtree J."/>
            <person name="Sebaihia M."/>
            <person name="Thomson N.R."/>
            <person name="Chaudhuri R."/>
            <person name="Henderson I.R."/>
            <person name="Sperandio V."/>
            <person name="Ravel J."/>
        </authorList>
    </citation>
    <scope>NUCLEOTIDE SEQUENCE [LARGE SCALE GENOMIC DNA]</scope>
    <source>
        <strain>E24377A / ETEC</strain>
    </source>
</reference>
<organism>
    <name type="scientific">Escherichia coli O139:H28 (strain E24377A / ETEC)</name>
    <dbReference type="NCBI Taxonomy" id="331111"/>
    <lineage>
        <taxon>Bacteria</taxon>
        <taxon>Pseudomonadati</taxon>
        <taxon>Pseudomonadota</taxon>
        <taxon>Gammaproteobacteria</taxon>
        <taxon>Enterobacterales</taxon>
        <taxon>Enterobacteriaceae</taxon>
        <taxon>Escherichia</taxon>
    </lineage>
</organism>
<evidence type="ECO:0000255" key="1">
    <source>
        <dbReference type="HAMAP-Rule" id="MF_01312"/>
    </source>
</evidence>
<name>NORV_ECO24</name>
<keyword id="KW-0963">Cytoplasm</keyword>
<keyword id="KW-0249">Electron transport</keyword>
<keyword id="KW-0285">Flavoprotein</keyword>
<keyword id="KW-0288">FMN</keyword>
<keyword id="KW-0408">Iron</keyword>
<keyword id="KW-0479">Metal-binding</keyword>
<keyword id="KW-0560">Oxidoreductase</keyword>
<keyword id="KW-1185">Reference proteome</keyword>
<keyword id="KW-0813">Transport</keyword>
<protein>
    <recommendedName>
        <fullName evidence="1">Anaerobic nitric oxide reductase flavorubredoxin</fullName>
        <shortName evidence="1">FlRd</shortName>
        <shortName evidence="1">FlavoRb</shortName>
    </recommendedName>
</protein>
<gene>
    <name evidence="1" type="primary">norV</name>
    <name evidence="1" type="synonym">flrD</name>
    <name type="ordered locus">EcE24377A_2994</name>
</gene>
<proteinExistence type="inferred from homology"/>
<comment type="function">
    <text evidence="1">Anaerobic nitric oxide reductase; uses NADH to detoxify nitric oxide (NO), protecting several 4Fe-4S NO-sensitive enzymes. Has at least 2 reductase partners, only one of which (NorW, flavorubredoxin reductase) has been identified. NO probably binds to the di-iron center; electrons enter from the NorW at rubredoxin and are transferred sequentially to the FMN center and the di-iron center. Also able to function as an aerobic oxygen reductase.</text>
</comment>
<comment type="cofactor">
    <cofactor evidence="1">
        <name>Fe cation</name>
        <dbReference type="ChEBI" id="CHEBI:24875"/>
    </cofactor>
    <text evidence="1">Binds 3 Fe cations per monomer.</text>
</comment>
<comment type="cofactor">
    <cofactor evidence="1">
        <name>FMN</name>
        <dbReference type="ChEBI" id="CHEBI:58210"/>
    </cofactor>
    <text evidence="1">Binds 1 FMN per monomer.</text>
</comment>
<comment type="pathway">
    <text evidence="1">Nitrogen metabolism; nitric oxide reduction.</text>
</comment>
<comment type="subunit">
    <text evidence="1">Homotetramer.</text>
</comment>
<comment type="subcellular location">
    <subcellularLocation>
        <location evidence="1">Cytoplasm</location>
    </subcellularLocation>
</comment>
<comment type="similarity">
    <text evidence="1">In the N-terminal section; belongs to the zinc metallo-hydrolase group 3 family.</text>
</comment>
<sequence>MSIVVKNNIHWVGQRDWEVRDFHGTEYKTLRGSSYNSYLIREEKNVLIDTVDHKFSREFVQNLRNEIDLADIDYIVINHAEEDHAGALTELMAQIPDTPIYCTANAIDSINGHHHHPEWNFNVVKTGDTLDIGNGKQLIFVETPMLHWPDSMMTYLTGDAVLFSNDAFGQHYCDEHLFNDEVDQTELFEQCQRYYANILTPFSRLVTPKITEILGFNLPVDMIATSHGVVWRDNPTQIVELYLKWAADYQEDRITIFYDTMSNNTRMMADAIAQGIAETDPRVAVKIFNVARSDKNEILTNVFRSKGVLVGTSTMNNVMMPKIAGLVEEMTGLRFRNKRASAFGSHGWSGGAVDRLSTRLQDAGFEMSLSLKAKWRPDQDALELCREHGREIARQWALAPLPQSTVNTVVKEETSATTTADLGPRMQCSVCQWIYDPAKGEPMQDVAPGTPWSEVPDNFLCPECSLGKDVFEELASEAK</sequence>
<feature type="chain" id="PRO_1000067507" description="Anaerobic nitric oxide reductase flavorubredoxin">
    <location>
        <begin position="1"/>
        <end position="479"/>
    </location>
</feature>
<feature type="domain" description="Flavodoxin-like" evidence="1">
    <location>
        <begin position="254"/>
        <end position="393"/>
    </location>
</feature>
<feature type="domain" description="Rubredoxin-like" evidence="1">
    <location>
        <begin position="423"/>
        <end position="474"/>
    </location>
</feature>
<feature type="region of interest" description="Zinc metallo-hydrolase">
    <location>
        <begin position="30"/>
        <end position="210"/>
    </location>
</feature>
<feature type="binding site" evidence="1">
    <location>
        <position position="79"/>
    </location>
    <ligand>
        <name>Fe cation</name>
        <dbReference type="ChEBI" id="CHEBI:24875"/>
        <label>1</label>
    </ligand>
</feature>
<feature type="binding site" evidence="1">
    <location>
        <position position="81"/>
    </location>
    <ligand>
        <name>Fe cation</name>
        <dbReference type="ChEBI" id="CHEBI:24875"/>
        <label>1</label>
    </ligand>
</feature>
<feature type="binding site" evidence="1">
    <location>
        <position position="83"/>
    </location>
    <ligand>
        <name>Fe cation</name>
        <dbReference type="ChEBI" id="CHEBI:24875"/>
        <label>2</label>
    </ligand>
</feature>
<feature type="binding site" evidence="1">
    <location>
        <position position="147"/>
    </location>
    <ligand>
        <name>Fe cation</name>
        <dbReference type="ChEBI" id="CHEBI:24875"/>
        <label>1</label>
    </ligand>
</feature>
<feature type="binding site" evidence="1">
    <location>
        <position position="166"/>
    </location>
    <ligand>
        <name>Fe cation</name>
        <dbReference type="ChEBI" id="CHEBI:24875"/>
        <label>1</label>
    </ligand>
</feature>
<feature type="binding site" evidence="1">
    <location>
        <position position="166"/>
    </location>
    <ligand>
        <name>Fe cation</name>
        <dbReference type="ChEBI" id="CHEBI:24875"/>
        <label>2</label>
    </ligand>
</feature>
<feature type="binding site" evidence="1">
    <location>
        <position position="227"/>
    </location>
    <ligand>
        <name>Fe cation</name>
        <dbReference type="ChEBI" id="CHEBI:24875"/>
        <label>2</label>
    </ligand>
</feature>
<feature type="binding site" evidence="1">
    <location>
        <begin position="260"/>
        <end position="264"/>
    </location>
    <ligand>
        <name>FMN</name>
        <dbReference type="ChEBI" id="CHEBI:58210"/>
    </ligand>
</feature>
<feature type="binding site" evidence="1">
    <location>
        <begin position="342"/>
        <end position="369"/>
    </location>
    <ligand>
        <name>FMN</name>
        <dbReference type="ChEBI" id="CHEBI:58210"/>
    </ligand>
</feature>
<feature type="binding site" evidence="1">
    <location>
        <position position="428"/>
    </location>
    <ligand>
        <name>Fe cation</name>
        <dbReference type="ChEBI" id="CHEBI:24875"/>
        <label>3</label>
    </ligand>
</feature>
<feature type="binding site" evidence="1">
    <location>
        <position position="431"/>
    </location>
    <ligand>
        <name>Fe cation</name>
        <dbReference type="ChEBI" id="CHEBI:24875"/>
        <label>3</label>
    </ligand>
</feature>
<feature type="binding site" evidence="1">
    <location>
        <position position="461"/>
    </location>
    <ligand>
        <name>Fe cation</name>
        <dbReference type="ChEBI" id="CHEBI:24875"/>
        <label>3</label>
    </ligand>
</feature>
<feature type="binding site" evidence="1">
    <location>
        <position position="464"/>
    </location>
    <ligand>
        <name>Fe cation</name>
        <dbReference type="ChEBI" id="CHEBI:24875"/>
        <label>3</label>
    </ligand>
</feature>
<dbReference type="EMBL" id="CP000800">
    <property type="protein sequence ID" value="ABV19145.1"/>
    <property type="molecule type" value="Genomic_DNA"/>
</dbReference>
<dbReference type="RefSeq" id="WP_000029625.1">
    <property type="nucleotide sequence ID" value="NC_009801.1"/>
</dbReference>
<dbReference type="BMRB" id="A7ZQD9"/>
<dbReference type="SMR" id="A7ZQD9"/>
<dbReference type="GeneID" id="75205951"/>
<dbReference type="KEGG" id="ecw:EcE24377A_2994"/>
<dbReference type="HOGENOM" id="CLU_017490_0_1_6"/>
<dbReference type="UniPathway" id="UPA00638"/>
<dbReference type="Proteomes" id="UP000001122">
    <property type="component" value="Chromosome"/>
</dbReference>
<dbReference type="GO" id="GO:0005737">
    <property type="term" value="C:cytoplasm"/>
    <property type="evidence" value="ECO:0007669"/>
    <property type="project" value="UniProtKB-SubCell"/>
</dbReference>
<dbReference type="GO" id="GO:0009055">
    <property type="term" value="F:electron transfer activity"/>
    <property type="evidence" value="ECO:0007669"/>
    <property type="project" value="UniProtKB-UniRule"/>
</dbReference>
<dbReference type="GO" id="GO:0010181">
    <property type="term" value="F:FMN binding"/>
    <property type="evidence" value="ECO:0007669"/>
    <property type="project" value="InterPro"/>
</dbReference>
<dbReference type="GO" id="GO:0005506">
    <property type="term" value="F:iron ion binding"/>
    <property type="evidence" value="ECO:0007669"/>
    <property type="project" value="InterPro"/>
</dbReference>
<dbReference type="GO" id="GO:0016966">
    <property type="term" value="F:nitric oxide reductase activity"/>
    <property type="evidence" value="ECO:0007669"/>
    <property type="project" value="InterPro"/>
</dbReference>
<dbReference type="CDD" id="cd07709">
    <property type="entry name" value="flavodiiron_proteins_MBL-fold"/>
    <property type="match status" value="1"/>
</dbReference>
<dbReference type="CDD" id="cd00730">
    <property type="entry name" value="rubredoxin"/>
    <property type="match status" value="1"/>
</dbReference>
<dbReference type="FunFam" id="2.20.28.10:FF:000010">
    <property type="entry name" value="Anaerobic nitric oxide reductase flavorubredoxin"/>
    <property type="match status" value="1"/>
</dbReference>
<dbReference type="FunFam" id="3.40.50.360:FF:000012">
    <property type="entry name" value="Anaerobic nitric oxide reductase flavorubredoxin"/>
    <property type="match status" value="1"/>
</dbReference>
<dbReference type="FunFam" id="3.60.15.10:FF:000009">
    <property type="entry name" value="Anaerobic nitric oxide reductase flavorubredoxin"/>
    <property type="match status" value="1"/>
</dbReference>
<dbReference type="Gene3D" id="2.20.28.10">
    <property type="match status" value="1"/>
</dbReference>
<dbReference type="Gene3D" id="3.40.50.360">
    <property type="match status" value="1"/>
</dbReference>
<dbReference type="Gene3D" id="3.60.15.10">
    <property type="entry name" value="Ribonuclease Z/Hydroxyacylglutathione hydrolase-like"/>
    <property type="match status" value="1"/>
</dbReference>
<dbReference type="HAMAP" id="MF_01312">
    <property type="entry name" value="NorV"/>
    <property type="match status" value="1"/>
</dbReference>
<dbReference type="InterPro" id="IPR023957">
    <property type="entry name" value="Anaer_NO_rdtase_flvorubredoxin"/>
</dbReference>
<dbReference type="InterPro" id="IPR008254">
    <property type="entry name" value="Flavodoxin/NO_synth"/>
</dbReference>
<dbReference type="InterPro" id="IPR029039">
    <property type="entry name" value="Flavoprotein-like_sf"/>
</dbReference>
<dbReference type="InterPro" id="IPR001279">
    <property type="entry name" value="Metallo-B-lactamas"/>
</dbReference>
<dbReference type="InterPro" id="IPR045761">
    <property type="entry name" value="ODP_dom"/>
</dbReference>
<dbReference type="InterPro" id="IPR036866">
    <property type="entry name" value="RibonucZ/Hydroxyglut_hydro"/>
</dbReference>
<dbReference type="InterPro" id="IPR024934">
    <property type="entry name" value="Rubredoxin-like_dom"/>
</dbReference>
<dbReference type="InterPro" id="IPR016440">
    <property type="entry name" value="Rubredoxin-O_OxRdtase"/>
</dbReference>
<dbReference type="InterPro" id="IPR024935">
    <property type="entry name" value="Rubredoxin_dom"/>
</dbReference>
<dbReference type="NCBIfam" id="NF003954">
    <property type="entry name" value="PRK05452.1"/>
    <property type="match status" value="1"/>
</dbReference>
<dbReference type="PANTHER" id="PTHR43717">
    <property type="entry name" value="ANAEROBIC NITRIC OXIDE REDUCTASE FLAVORUBREDOXIN"/>
    <property type="match status" value="1"/>
</dbReference>
<dbReference type="PANTHER" id="PTHR43717:SF1">
    <property type="entry name" value="ANAEROBIC NITRIC OXIDE REDUCTASE FLAVORUBREDOXIN"/>
    <property type="match status" value="1"/>
</dbReference>
<dbReference type="Pfam" id="PF00258">
    <property type="entry name" value="Flavodoxin_1"/>
    <property type="match status" value="1"/>
</dbReference>
<dbReference type="Pfam" id="PF19583">
    <property type="entry name" value="ODP"/>
    <property type="match status" value="1"/>
</dbReference>
<dbReference type="Pfam" id="PF00301">
    <property type="entry name" value="Rubredoxin"/>
    <property type="match status" value="1"/>
</dbReference>
<dbReference type="PIRSF" id="PIRSF005243">
    <property type="entry name" value="ROO"/>
    <property type="match status" value="1"/>
</dbReference>
<dbReference type="PRINTS" id="PR00163">
    <property type="entry name" value="RUBREDOXIN"/>
</dbReference>
<dbReference type="SMART" id="SM00849">
    <property type="entry name" value="Lactamase_B"/>
    <property type="match status" value="1"/>
</dbReference>
<dbReference type="SUPFAM" id="SSF52218">
    <property type="entry name" value="Flavoproteins"/>
    <property type="match status" value="1"/>
</dbReference>
<dbReference type="SUPFAM" id="SSF56281">
    <property type="entry name" value="Metallo-hydrolase/oxidoreductase"/>
    <property type="match status" value="1"/>
</dbReference>
<dbReference type="SUPFAM" id="SSF57802">
    <property type="entry name" value="Rubredoxin-like"/>
    <property type="match status" value="1"/>
</dbReference>
<dbReference type="PROSITE" id="PS50902">
    <property type="entry name" value="FLAVODOXIN_LIKE"/>
    <property type="match status" value="1"/>
</dbReference>
<dbReference type="PROSITE" id="PS50903">
    <property type="entry name" value="RUBREDOXIN_LIKE"/>
    <property type="match status" value="1"/>
</dbReference>
<accession>A7ZQD9</accession>